<protein>
    <recommendedName>
        <fullName>Chitinase 2</fullName>
        <ecNumber>3.2.1.14</ecNumber>
    </recommendedName>
</protein>
<accession>P40953</accession>
<accession>A0A1D8PNW0</accession>
<accession>Q5AKC5</accession>
<accession>Q5AKT9</accession>
<name>CHI2_CANAL</name>
<sequence length="583" mass="60815">MLSFKSLLAAAVVASSALASASNQVALYWGQNGAGGQERLAQYCQEADVDIILLSFLNLFPDPLNVNFANQCGNTFESGLLHCSQIGADIKTCQSLGKTVLLSLGGGVGDYGFSDVASATKFADTLWNKFGAGEDPERPFDDAVVDGFDFDIEHGGATGYPELATALRGKFAKDTSKNYFLSAAPQCPYPDASLGDLLSKVPLDFAFIQFYNNYCSINGQFNYDTWSKFADSAPNKNIKLFVGVPATSNIAGYVDTSKLSSAIEEIKCDSHFAGVSLWDASGAWLNTDEKGENFVVQVKNVLNQNACVAPSSSATTQSTTTTSSAVTQSTTTTSAAITQSATTTSAAVATKSNQIVTSSSSSSSSIFYGNSTTESSTGIATGTVLPTGSNENAATTGSGSNTKLAISTVTDVQKTVITITSCSEHKCVATPVTTGVVVVTDIDTVYTTYCPLTNSQVYVSVKTVVCTEETCVPSPTSTSQKPKASTTIKGVEKGQTTSYPVVGTTEGVKKIVTTSAQTVGSSTKYVTIELTSTITPVTYPTSVASNGTNTTVPVFTFEGGAAVANSLNSVWFTVPFLLAAFAF</sequence>
<organism>
    <name type="scientific">Candida albicans (strain SC5314 / ATCC MYA-2876)</name>
    <name type="common">Yeast</name>
    <dbReference type="NCBI Taxonomy" id="237561"/>
    <lineage>
        <taxon>Eukaryota</taxon>
        <taxon>Fungi</taxon>
        <taxon>Dikarya</taxon>
        <taxon>Ascomycota</taxon>
        <taxon>Saccharomycotina</taxon>
        <taxon>Pichiomycetes</taxon>
        <taxon>Debaryomycetaceae</taxon>
        <taxon>Candida/Lodderomyces clade</taxon>
        <taxon>Candida</taxon>
    </lineage>
</organism>
<reference key="1">
    <citation type="journal article" date="1995" name="Proc. Natl. Acad. Sci. U.S.A.">
        <title>Molecular cloning and characterization of chitinase genes from Candida albicans.</title>
        <authorList>
            <person name="McCreath K.J."/>
            <person name="Specht C.A."/>
            <person name="Robbins P.W."/>
        </authorList>
    </citation>
    <scope>NUCLEOTIDE SEQUENCE [GENOMIC DNA]</scope>
    <scope>INDUCTION</scope>
    <scope>FUNCTION</scope>
    <scope>DISRUPTION PHENOTYPE</scope>
    <source>
        <strain>ATCC 10261 / CBS 2718 / NBRC 1061</strain>
    </source>
</reference>
<reference key="2">
    <citation type="journal article" date="2004" name="Proc. Natl. Acad. Sci. U.S.A.">
        <title>The diploid genome sequence of Candida albicans.</title>
        <authorList>
            <person name="Jones T."/>
            <person name="Federspiel N.A."/>
            <person name="Chibana H."/>
            <person name="Dungan J."/>
            <person name="Kalman S."/>
            <person name="Magee B.B."/>
            <person name="Newport G."/>
            <person name="Thorstenson Y.R."/>
            <person name="Agabian N."/>
            <person name="Magee P.T."/>
            <person name="Davis R.W."/>
            <person name="Scherer S."/>
        </authorList>
    </citation>
    <scope>NUCLEOTIDE SEQUENCE [LARGE SCALE GENOMIC DNA]</scope>
    <source>
        <strain>SC5314 / ATCC MYA-2876</strain>
    </source>
</reference>
<reference key="3">
    <citation type="journal article" date="2007" name="Genome Biol.">
        <title>Assembly of the Candida albicans genome into sixteen supercontigs aligned on the eight chromosomes.</title>
        <authorList>
            <person name="van het Hoog M."/>
            <person name="Rast T.J."/>
            <person name="Martchenko M."/>
            <person name="Grindle S."/>
            <person name="Dignard D."/>
            <person name="Hogues H."/>
            <person name="Cuomo C."/>
            <person name="Berriman M."/>
            <person name="Scherer S."/>
            <person name="Magee B.B."/>
            <person name="Whiteway M."/>
            <person name="Chibana H."/>
            <person name="Nantel A."/>
            <person name="Magee P.T."/>
        </authorList>
    </citation>
    <scope>GENOME REANNOTATION</scope>
    <source>
        <strain>SC5314 / ATCC MYA-2876</strain>
    </source>
</reference>
<reference key="4">
    <citation type="journal article" date="2013" name="Genome Biol.">
        <title>Assembly of a phased diploid Candida albicans genome facilitates allele-specific measurements and provides a simple model for repeat and indel structure.</title>
        <authorList>
            <person name="Muzzey D."/>
            <person name="Schwartz K."/>
            <person name="Weissman J.S."/>
            <person name="Sherlock G."/>
        </authorList>
    </citation>
    <scope>NUCLEOTIDE SEQUENCE [LARGE SCALE GENOMIC DNA]</scope>
    <scope>GENOME REANNOTATION</scope>
    <source>
        <strain>SC5314 / ATCC MYA-2876</strain>
    </source>
</reference>
<reference key="5">
    <citation type="journal article" date="2002" name="Eukaryot. Cell">
        <title>A forkhead transcription factor is important for true hyphal as well as yeast morphogenesis in Candida albicans.</title>
        <authorList>
            <person name="Bensen E.S."/>
            <person name="Filler S.G."/>
            <person name="Berman J."/>
        </authorList>
    </citation>
    <scope>INDUCTION</scope>
</reference>
<reference key="6">
    <citation type="journal article" date="2005" name="Fungal Genet. Biol.">
        <title>Candida albicans CHT3 encodes the functional homolog of the Cts1 chitinase of Saccharomyces cerevisiae.</title>
        <authorList>
            <person name="Dunkler A."/>
            <person name="Walther A."/>
            <person name="Specht C.A."/>
            <person name="Wendland J."/>
        </authorList>
    </citation>
    <scope>DISRUPTION PHENOTYPE</scope>
</reference>
<reference key="7">
    <citation type="journal article" date="2006" name="PLoS Pathog.">
        <title>Critical role of Bcr1-dependent adhesins in C. albicans biofilm formation in vitro and in vivo.</title>
        <authorList>
            <person name="Nobile C.J."/>
            <person name="Andes D.R."/>
            <person name="Nett J.E."/>
            <person name="Smith F.J."/>
            <person name="Yue F."/>
            <person name="Phan Q.T."/>
            <person name="Edwards J.E."/>
            <person name="Filler S.G."/>
            <person name="Mitchell A.P."/>
        </authorList>
    </citation>
    <scope>INDUCTION</scope>
</reference>
<reference key="8">
    <citation type="journal article" date="2010" name="Jpn. J. Infect. Dis.">
        <title>Micafungin alters the expression of genes related to cell wall integrity in Candida albicans biofilms.</title>
        <authorList>
            <person name="Kaneko Y."/>
            <person name="Ohno H."/>
            <person name="Kohno S."/>
            <person name="Miyazaki Y."/>
        </authorList>
    </citation>
    <scope>INDUCTION</scope>
</reference>
<reference key="9">
    <citation type="journal article" date="2010" name="Yeast">
        <title>Mass spectrometric analysis of the secretome of Candida albicans.</title>
        <authorList>
            <person name="Sorgo A.G."/>
            <person name="Heilmann C.J."/>
            <person name="Dekker H.L."/>
            <person name="Brul S."/>
            <person name="de Koster C.G."/>
            <person name="Klis F.M."/>
        </authorList>
    </citation>
    <scope>IDENTIFICATION BY MASS SPECTROMETRY</scope>
    <scope>SUBCELLULAR LOCATION</scope>
</reference>
<reference key="10">
    <citation type="journal article" date="2011" name="Eukaryot. Cell">
        <title>Proteolytic cleavage of covalently linked cell wall proteins by Candida albicans Sap9 and Sap10.</title>
        <authorList>
            <person name="Schild L."/>
            <person name="Heyken A."/>
            <person name="de Groot P.W."/>
            <person name="Hiller E."/>
            <person name="Mock M."/>
            <person name="de Koster C."/>
            <person name="Horn U."/>
            <person name="Rupp S."/>
            <person name="Hube B."/>
        </authorList>
    </citation>
    <scope>IDENTIFICATION BY MASS SPECTROMETRY</scope>
    <scope>SUBCELLULAR LOCATION</scope>
    <scope>PROTEOLYTIC CLEAVAGE BYSAP9 AND SAP10</scope>
</reference>
<reference key="11">
    <citation type="journal article" date="2011" name="Eukaryot. Cell">
        <title>Effects of fluconazole on the secretome, the wall proteome, and wall integrity of the clinical fungus Candida albicans.</title>
        <authorList>
            <person name="Sorgo A.G."/>
            <person name="Heilmann C.J."/>
            <person name="Dekker H.L."/>
            <person name="Bekker M."/>
            <person name="Brul S."/>
            <person name="de Koster C.G."/>
            <person name="de Koning L.J."/>
            <person name="Klis F.M."/>
        </authorList>
    </citation>
    <scope>IDENTIFICATION BY MASS SPECTROMETRY</scope>
    <scope>SUBCELLULAR LOCATION</scope>
</reference>
<reference key="12">
    <citation type="journal article" date="2011" name="Microbiology">
        <title>Mass spectrometric quantification of the adaptations in the wall proteome of Candida albicans in response to ambient pH.</title>
        <authorList>
            <person name="Sosinska G.J."/>
            <person name="de Koning L.J."/>
            <person name="de Groot P.W."/>
            <person name="Manders E.M."/>
            <person name="Dekker H.L."/>
            <person name="Hellingwerf K.J."/>
            <person name="de Koster C.G."/>
            <person name="Klis F.M."/>
        </authorList>
    </citation>
    <scope>IDENTIFICATION BY MASS SPECTROMETRY</scope>
    <scope>SUBCELLULAR LOCATION</scope>
</reference>
<dbReference type="EC" id="3.2.1.14"/>
<dbReference type="EMBL" id="U15800">
    <property type="protein sequence ID" value="AAA68015.1"/>
    <property type="molecule type" value="Genomic_DNA"/>
</dbReference>
<dbReference type="EMBL" id="CP017627">
    <property type="protein sequence ID" value="AOW29822.1"/>
    <property type="molecule type" value="Genomic_DNA"/>
</dbReference>
<dbReference type="RefSeq" id="XP_721807.2">
    <property type="nucleotide sequence ID" value="XM_716714.2"/>
</dbReference>
<dbReference type="SMR" id="P40953"/>
<dbReference type="STRING" id="237561.P40953"/>
<dbReference type="CAZy" id="GH18">
    <property type="family name" value="Glycoside Hydrolase Family 18"/>
</dbReference>
<dbReference type="GlyCosmos" id="P40953">
    <property type="glycosylation" value="3 sites, No reported glycans"/>
</dbReference>
<dbReference type="EnsemblFungi" id="C5_04130C_A-T">
    <property type="protein sequence ID" value="C5_04130C_A-T-p1"/>
    <property type="gene ID" value="C5_04130C_A"/>
</dbReference>
<dbReference type="GeneID" id="3636523"/>
<dbReference type="KEGG" id="cal:CAALFM_C504130CA"/>
<dbReference type="CGD" id="CAL0000190954">
    <property type="gene designation" value="CHT2"/>
</dbReference>
<dbReference type="VEuPathDB" id="FungiDB:C5_04130C_A"/>
<dbReference type="eggNOG" id="KOG4701">
    <property type="taxonomic scope" value="Eukaryota"/>
</dbReference>
<dbReference type="HOGENOM" id="CLU_007818_7_2_1"/>
<dbReference type="InParanoid" id="P40953"/>
<dbReference type="OrthoDB" id="6020543at2759"/>
<dbReference type="PRO" id="PR:P40953"/>
<dbReference type="Proteomes" id="UP000000559">
    <property type="component" value="Chromosome 5"/>
</dbReference>
<dbReference type="GO" id="GO:0009986">
    <property type="term" value="C:cell surface"/>
    <property type="evidence" value="ECO:0000314"/>
    <property type="project" value="CGD"/>
</dbReference>
<dbReference type="GO" id="GO:0005576">
    <property type="term" value="C:extracellular region"/>
    <property type="evidence" value="ECO:0000314"/>
    <property type="project" value="CGD"/>
</dbReference>
<dbReference type="GO" id="GO:0062040">
    <property type="term" value="C:fungal biofilm matrix"/>
    <property type="evidence" value="ECO:0000314"/>
    <property type="project" value="CGD"/>
</dbReference>
<dbReference type="GO" id="GO:0009277">
    <property type="term" value="C:fungal-type cell wall"/>
    <property type="evidence" value="ECO:0000314"/>
    <property type="project" value="CGD"/>
</dbReference>
<dbReference type="GO" id="GO:0098552">
    <property type="term" value="C:side of membrane"/>
    <property type="evidence" value="ECO:0007669"/>
    <property type="project" value="UniProtKB-KW"/>
</dbReference>
<dbReference type="GO" id="GO:0030445">
    <property type="term" value="C:yeast-form cell wall"/>
    <property type="evidence" value="ECO:0000314"/>
    <property type="project" value="CGD"/>
</dbReference>
<dbReference type="GO" id="GO:0008061">
    <property type="term" value="F:chitin binding"/>
    <property type="evidence" value="ECO:0007669"/>
    <property type="project" value="UniProtKB-KW"/>
</dbReference>
<dbReference type="GO" id="GO:0004568">
    <property type="term" value="F:chitinase activity"/>
    <property type="evidence" value="ECO:0000250"/>
    <property type="project" value="CGD"/>
</dbReference>
<dbReference type="GO" id="GO:0008843">
    <property type="term" value="F:endochitinase activity"/>
    <property type="evidence" value="ECO:0007669"/>
    <property type="project" value="UniProtKB-EC"/>
</dbReference>
<dbReference type="GO" id="GO:0044403">
    <property type="term" value="P:biological process involved in symbiotic interaction"/>
    <property type="evidence" value="ECO:0000315"/>
    <property type="project" value="CGD"/>
</dbReference>
<dbReference type="GO" id="GO:0009267">
    <property type="term" value="P:cellular response to starvation"/>
    <property type="evidence" value="ECO:0000315"/>
    <property type="project" value="CGD"/>
</dbReference>
<dbReference type="GO" id="GO:0006032">
    <property type="term" value="P:chitin catabolic process"/>
    <property type="evidence" value="ECO:0007669"/>
    <property type="project" value="UniProtKB-KW"/>
</dbReference>
<dbReference type="GO" id="GO:0030447">
    <property type="term" value="P:filamentous growth"/>
    <property type="evidence" value="ECO:0000315"/>
    <property type="project" value="CGD"/>
</dbReference>
<dbReference type="GO" id="GO:0044182">
    <property type="term" value="P:filamentous growth of a population of unicellular organisms"/>
    <property type="evidence" value="ECO:0000315"/>
    <property type="project" value="CGD"/>
</dbReference>
<dbReference type="GO" id="GO:0036170">
    <property type="term" value="P:filamentous growth of a population of unicellular organisms in response to starvation"/>
    <property type="evidence" value="ECO:0000315"/>
    <property type="project" value="CGD"/>
</dbReference>
<dbReference type="GO" id="GO:0000272">
    <property type="term" value="P:polysaccharide catabolic process"/>
    <property type="evidence" value="ECO:0007669"/>
    <property type="project" value="UniProtKB-KW"/>
</dbReference>
<dbReference type="CDD" id="cd02877">
    <property type="entry name" value="GH18_hevamine_XipI_class_III"/>
    <property type="match status" value="1"/>
</dbReference>
<dbReference type="FunFam" id="3.20.20.80:FF:000125">
    <property type="entry name" value="CTS1p Endochitinase"/>
    <property type="match status" value="1"/>
</dbReference>
<dbReference type="Gene3D" id="3.20.20.80">
    <property type="entry name" value="Glycosidases"/>
    <property type="match status" value="1"/>
</dbReference>
<dbReference type="InterPro" id="IPR045321">
    <property type="entry name" value="Cts1-like"/>
</dbReference>
<dbReference type="InterPro" id="IPR025928">
    <property type="entry name" value="Flocculin_t3_rpt"/>
</dbReference>
<dbReference type="InterPro" id="IPR001223">
    <property type="entry name" value="Glyco_hydro18_cat"/>
</dbReference>
<dbReference type="InterPro" id="IPR001579">
    <property type="entry name" value="Glyco_hydro_18_chit_AS"/>
</dbReference>
<dbReference type="InterPro" id="IPR017853">
    <property type="entry name" value="Glycoside_hydrolase_SF"/>
</dbReference>
<dbReference type="InterPro" id="IPR050542">
    <property type="entry name" value="Glycosyl_Hydrlase18_Chitinase"/>
</dbReference>
<dbReference type="PANTHER" id="PTHR45708">
    <property type="entry name" value="ENDOCHITINASE"/>
    <property type="match status" value="1"/>
</dbReference>
<dbReference type="PANTHER" id="PTHR45708:SF49">
    <property type="entry name" value="ENDOCHITINASE"/>
    <property type="match status" value="1"/>
</dbReference>
<dbReference type="Pfam" id="PF13928">
    <property type="entry name" value="Flocculin_t3"/>
    <property type="match status" value="1"/>
</dbReference>
<dbReference type="Pfam" id="PF00704">
    <property type="entry name" value="Glyco_hydro_18"/>
    <property type="match status" value="1"/>
</dbReference>
<dbReference type="SUPFAM" id="SSF51445">
    <property type="entry name" value="(Trans)glycosidases"/>
    <property type="match status" value="1"/>
</dbReference>
<dbReference type="PROSITE" id="PS01095">
    <property type="entry name" value="GH18_1"/>
    <property type="match status" value="1"/>
</dbReference>
<dbReference type="PROSITE" id="PS51910">
    <property type="entry name" value="GH18_2"/>
    <property type="match status" value="1"/>
</dbReference>
<comment type="function">
    <text evidence="8">Chitinase involved in the remodeling of chitin in the fungal cell wall. Plays a role in cell separation.</text>
</comment>
<comment type="catalytic activity">
    <reaction>
        <text>Random endo-hydrolysis of N-acetyl-beta-D-glucosaminide (1-&gt;4)-beta-linkages in chitin and chitodextrins.</text>
        <dbReference type="EC" id="3.2.1.14"/>
    </reaction>
</comment>
<comment type="subcellular location">
    <subcellularLocation>
        <location>Secreted</location>
        <location>Cell wall</location>
    </subcellularLocation>
    <subcellularLocation>
        <location>Membrane</location>
        <topology>Lipid-anchor</topology>
        <topology>GPI-anchor</topology>
    </subcellularLocation>
</comment>
<comment type="induction">
    <text evidence="3 5 6 8">Expression is positively regulated by BCR1 and FKH2. Transcription is greater during growth of the yeast form as compared to the mycelial form, and down-regulated by micafungin treatment.</text>
</comment>
<comment type="PTM">
    <text evidence="7">The GPI-anchor is attached to the protein in the endoplasmic reticulum and serves to target the protein to the cell surface. There, the glucosamine-inositol phospholipid moiety is cleaved off and the GPI-modified mannoprotein is covalently attached via its lipidless GPI glycan remnant to the 1,6-beta-glucan of the outer cell wall layer.</text>
</comment>
<comment type="PTM">
    <text evidence="7">Proteolytic cleavage by SAP9 and SAP10 leads to the cell wall release of CHT2 and increased chitinase activity, suggesting a direct influence of SAP9 and SAP10 on CHT2 function.</text>
</comment>
<comment type="disruption phenotype">
    <text evidence="4 8">Leads to the clumping or clusterings of cells from early exponential phase, and to increased hyphal growth on solid media.</text>
</comment>
<comment type="similarity">
    <text evidence="9">Belongs to the glycosyl hydrolase 18 family. Chitinase class III subfamily.</text>
</comment>
<feature type="signal peptide" evidence="1">
    <location>
        <begin position="1"/>
        <end position="19"/>
    </location>
</feature>
<feature type="chain" id="PRO_0000011925" description="Chitinase 2">
    <location>
        <begin position="20"/>
        <end position="560"/>
    </location>
</feature>
<feature type="propeptide" id="PRO_0000429923" description="Removed in mature form" evidence="1">
    <location>
        <begin position="561"/>
        <end position="583"/>
    </location>
</feature>
<feature type="domain" description="GH18" evidence="2">
    <location>
        <begin position="23"/>
        <end position="305"/>
    </location>
</feature>
<feature type="active site" description="Proton donor" evidence="2">
    <location>
        <position position="153"/>
    </location>
</feature>
<feature type="lipid moiety-binding region" description="GPI-anchor amidated glycine" evidence="1">
    <location>
        <position position="560"/>
    </location>
</feature>
<feature type="glycosylation site" description="N-linked (GlcNAc...) asparagine" evidence="1">
    <location>
        <position position="370"/>
    </location>
</feature>
<feature type="glycosylation site" description="N-linked (GlcNAc...) asparagine" evidence="1">
    <location>
        <position position="546"/>
    </location>
</feature>
<feature type="glycosylation site" description="N-linked (GlcNAc...) asparagine" evidence="1">
    <location>
        <position position="549"/>
    </location>
</feature>
<feature type="sequence conflict" description="In Ref. 1; AAA68015." evidence="9" ref="1">
    <original>A</original>
    <variation>T</variation>
    <location>
        <position position="47"/>
    </location>
</feature>
<feature type="sequence conflict" description="In Ref. 1; AAA68015." evidence="9" ref="1">
    <original>I</original>
    <variation>V</variation>
    <location>
        <position position="52"/>
    </location>
</feature>
<feature type="sequence conflict" description="In Ref. 1; AAA68015." evidence="9" ref="1">
    <original>A</original>
    <variation>T</variation>
    <location>
        <position position="349"/>
    </location>
</feature>
<feature type="sequence conflict" description="In Ref. 1; AAA68015." evidence="9" ref="1">
    <original>SVK</original>
    <variation>PVQ</variation>
    <location>
        <begin position="460"/>
        <end position="462"/>
    </location>
</feature>
<feature type="sequence conflict" description="In Ref. 1; AAA68015." evidence="9" ref="1">
    <original>S</original>
    <variation>A</variation>
    <location>
        <position position="479"/>
    </location>
</feature>
<feature type="sequence conflict" description="In Ref. 1; AAA68015." evidence="9" ref="1">
    <original>T</original>
    <variation>P</variation>
    <location>
        <position position="573"/>
    </location>
</feature>
<evidence type="ECO:0000255" key="1"/>
<evidence type="ECO:0000255" key="2">
    <source>
        <dbReference type="PROSITE-ProRule" id="PRU01258"/>
    </source>
</evidence>
<evidence type="ECO:0000269" key="3">
    <source>
    </source>
</evidence>
<evidence type="ECO:0000269" key="4">
    <source>
    </source>
</evidence>
<evidence type="ECO:0000269" key="5">
    <source>
    </source>
</evidence>
<evidence type="ECO:0000269" key="6">
    <source>
    </source>
</evidence>
<evidence type="ECO:0000269" key="7">
    <source>
    </source>
</evidence>
<evidence type="ECO:0000269" key="8">
    <source>
    </source>
</evidence>
<evidence type="ECO:0000305" key="9"/>
<gene>
    <name type="primary">CHT2</name>
    <name type="ordered locus">CAALFM_C504130CA</name>
    <name type="ORF">CaO19.11376</name>
    <name type="ORF">CaO19.3895</name>
</gene>
<proteinExistence type="evidence at protein level"/>
<keyword id="KW-0119">Carbohydrate metabolism</keyword>
<keyword id="KW-0134">Cell wall</keyword>
<keyword id="KW-0146">Chitin degradation</keyword>
<keyword id="KW-0147">Chitin-binding</keyword>
<keyword id="KW-0325">Glycoprotein</keyword>
<keyword id="KW-0326">Glycosidase</keyword>
<keyword id="KW-0336">GPI-anchor</keyword>
<keyword id="KW-0378">Hydrolase</keyword>
<keyword id="KW-0449">Lipoprotein</keyword>
<keyword id="KW-0472">Membrane</keyword>
<keyword id="KW-0624">Polysaccharide degradation</keyword>
<keyword id="KW-1185">Reference proteome</keyword>
<keyword id="KW-0964">Secreted</keyword>
<keyword id="KW-0732">Signal</keyword>